<sequence>MRSRSSNAEGSAPKQIPRHSKFQDSIQDMKHRTHKKDPSCESEGVLPRPVSEKSHTGKGHHTEDLSRDDLLFLLSILEGELQARDEVIGILRAEKIDLALLEAQYGFVTPKKVLEALQRDAFQAKSAPWQEDIYEKPMNELDKVVEKHKESHRRILEQLLMVERSHRQTIMEMEEEKRKHKEYMKKSDEFINLLEQECERLKKLIDQETASQEKKEQEKEKRIKTLKEELTKLKSFALMVVDEQQRLTAQLALQRQKIQALTTSAKETQGKLALAEARAQEEEQKATRLEKELQTQTTEFHQNQDKIMAKLTNEDSQNRQLRQKLAALSRQIDELEETNRSLRKAEEELQDIKDKINKGEYGNSGIMDEVDELRKRVLDMEGKDEELIKMEEQCRDLNKRLEKETVQSKDFKLEVDKLSVRITALEKLEDALDKSKQECYSLKCNLEKEKMTTKQLSEELESLNARIKELEAIESRLEKTEITLKDDLTKLKTLTVMLVDERKTMSEKLKQTEDKLQSTTSQLQAEQNKVTTVTEKLIEETKRALKSKTDAEEKMYSVTKERDDLRNKLKAEEEKGHDLLSKVTILKNRLQSLEAIEKDFVKNKLNQDSSKSTAALHQENNKIKELSQEVENLKLKLKDMKAIEDDLMKTEDEYETLERRYANERDKAQFLSQELEHAKMELAKYKLAEKTESSHEQWLFRRLQEEEAKSGHLSREVDALKEKIHEYMATEDLICHLQGDHSLLQKKLNQQENRNRDLGREIENLTKELERYRHFSKSLRPSLNGRRISDPQVFSKEVQTEAADSEPPDYKSLIPLERAVINGQFYEENEDQDDDPNEEESVLSFRCSQSSSLPMNRKLWIPWMKSKEGHPQNGKIQTKSNGNFVQPGDLVLSHTPGQPLHIKVTPDHIQNTATLEITSPTTESPHSYTSTAVIPNCGTPKQRITILQNASITPIKSKSSTESLMNLEQSMSPVTMATFARAQTPESCGSVTPERTMSPIQVLAMTGSPSSPEQGCSPEPIEISAKHAIFRVSPDRQSSWQFQRSNSNSSSVITTEDNKIHIHLGSPYMQAVAGPMRPASPSAPLQDNRTQGLTNGALNKTTNKVTSSITITPTATPLPRQSQITVSNIYN</sequence>
<reference key="1">
    <citation type="submission" date="2008-04" db="EMBL/GenBank/DDBJ databases">
        <title>Molecular cloning of a novel variant of mouse downregulated in ovarian cancer 1 (DOC1) homolog.</title>
        <authorList>
            <person name="Revert-Ros F."/>
            <person name="Saadeddin A."/>
            <person name="Saus J."/>
        </authorList>
    </citation>
    <scope>NUCLEOTIDE SEQUENCE [MRNA] (ISOFORM 1)</scope>
    <source>
        <strain>C3H/HeJ</strain>
    </source>
</reference>
<reference key="2">
    <citation type="journal article" date="2005" name="Science">
        <title>The transcriptional landscape of the mammalian genome.</title>
        <authorList>
            <person name="Carninci P."/>
            <person name="Kasukawa T."/>
            <person name="Katayama S."/>
            <person name="Gough J."/>
            <person name="Frith M.C."/>
            <person name="Maeda N."/>
            <person name="Oyama R."/>
            <person name="Ravasi T."/>
            <person name="Lenhard B."/>
            <person name="Wells C."/>
            <person name="Kodzius R."/>
            <person name="Shimokawa K."/>
            <person name="Bajic V.B."/>
            <person name="Brenner S.E."/>
            <person name="Batalov S."/>
            <person name="Forrest A.R."/>
            <person name="Zavolan M."/>
            <person name="Davis M.J."/>
            <person name="Wilming L.G."/>
            <person name="Aidinis V."/>
            <person name="Allen J.E."/>
            <person name="Ambesi-Impiombato A."/>
            <person name="Apweiler R."/>
            <person name="Aturaliya R.N."/>
            <person name="Bailey T.L."/>
            <person name="Bansal M."/>
            <person name="Baxter L."/>
            <person name="Beisel K.W."/>
            <person name="Bersano T."/>
            <person name="Bono H."/>
            <person name="Chalk A.M."/>
            <person name="Chiu K.P."/>
            <person name="Choudhary V."/>
            <person name="Christoffels A."/>
            <person name="Clutterbuck D.R."/>
            <person name="Crowe M.L."/>
            <person name="Dalla E."/>
            <person name="Dalrymple B.P."/>
            <person name="de Bono B."/>
            <person name="Della Gatta G."/>
            <person name="di Bernardo D."/>
            <person name="Down T."/>
            <person name="Engstrom P."/>
            <person name="Fagiolini M."/>
            <person name="Faulkner G."/>
            <person name="Fletcher C.F."/>
            <person name="Fukushima T."/>
            <person name="Furuno M."/>
            <person name="Futaki S."/>
            <person name="Gariboldi M."/>
            <person name="Georgii-Hemming P."/>
            <person name="Gingeras T.R."/>
            <person name="Gojobori T."/>
            <person name="Green R.E."/>
            <person name="Gustincich S."/>
            <person name="Harbers M."/>
            <person name="Hayashi Y."/>
            <person name="Hensch T.K."/>
            <person name="Hirokawa N."/>
            <person name="Hill D."/>
            <person name="Huminiecki L."/>
            <person name="Iacono M."/>
            <person name="Ikeo K."/>
            <person name="Iwama A."/>
            <person name="Ishikawa T."/>
            <person name="Jakt M."/>
            <person name="Kanapin A."/>
            <person name="Katoh M."/>
            <person name="Kawasawa Y."/>
            <person name="Kelso J."/>
            <person name="Kitamura H."/>
            <person name="Kitano H."/>
            <person name="Kollias G."/>
            <person name="Krishnan S.P."/>
            <person name="Kruger A."/>
            <person name="Kummerfeld S.K."/>
            <person name="Kurochkin I.V."/>
            <person name="Lareau L.F."/>
            <person name="Lazarevic D."/>
            <person name="Lipovich L."/>
            <person name="Liu J."/>
            <person name="Liuni S."/>
            <person name="McWilliam S."/>
            <person name="Madan Babu M."/>
            <person name="Madera M."/>
            <person name="Marchionni L."/>
            <person name="Matsuda H."/>
            <person name="Matsuzawa S."/>
            <person name="Miki H."/>
            <person name="Mignone F."/>
            <person name="Miyake S."/>
            <person name="Morris K."/>
            <person name="Mottagui-Tabar S."/>
            <person name="Mulder N."/>
            <person name="Nakano N."/>
            <person name="Nakauchi H."/>
            <person name="Ng P."/>
            <person name="Nilsson R."/>
            <person name="Nishiguchi S."/>
            <person name="Nishikawa S."/>
            <person name="Nori F."/>
            <person name="Ohara O."/>
            <person name="Okazaki Y."/>
            <person name="Orlando V."/>
            <person name="Pang K.C."/>
            <person name="Pavan W.J."/>
            <person name="Pavesi G."/>
            <person name="Pesole G."/>
            <person name="Petrovsky N."/>
            <person name="Piazza S."/>
            <person name="Reed J."/>
            <person name="Reid J.F."/>
            <person name="Ring B.Z."/>
            <person name="Ringwald M."/>
            <person name="Rost B."/>
            <person name="Ruan Y."/>
            <person name="Salzberg S.L."/>
            <person name="Sandelin A."/>
            <person name="Schneider C."/>
            <person name="Schoenbach C."/>
            <person name="Sekiguchi K."/>
            <person name="Semple C.A."/>
            <person name="Seno S."/>
            <person name="Sessa L."/>
            <person name="Sheng Y."/>
            <person name="Shibata Y."/>
            <person name="Shimada H."/>
            <person name="Shimada K."/>
            <person name="Silva D."/>
            <person name="Sinclair B."/>
            <person name="Sperling S."/>
            <person name="Stupka E."/>
            <person name="Sugiura K."/>
            <person name="Sultana R."/>
            <person name="Takenaka Y."/>
            <person name="Taki K."/>
            <person name="Tammoja K."/>
            <person name="Tan S.L."/>
            <person name="Tang S."/>
            <person name="Taylor M.S."/>
            <person name="Tegner J."/>
            <person name="Teichmann S.A."/>
            <person name="Ueda H.R."/>
            <person name="van Nimwegen E."/>
            <person name="Verardo R."/>
            <person name="Wei C.L."/>
            <person name="Yagi K."/>
            <person name="Yamanishi H."/>
            <person name="Zabarovsky E."/>
            <person name="Zhu S."/>
            <person name="Zimmer A."/>
            <person name="Hide W."/>
            <person name="Bult C."/>
            <person name="Grimmond S.M."/>
            <person name="Teasdale R.D."/>
            <person name="Liu E.T."/>
            <person name="Brusic V."/>
            <person name="Quackenbush J."/>
            <person name="Wahlestedt C."/>
            <person name="Mattick J.S."/>
            <person name="Hume D.A."/>
            <person name="Kai C."/>
            <person name="Sasaki D."/>
            <person name="Tomaru Y."/>
            <person name="Fukuda S."/>
            <person name="Kanamori-Katayama M."/>
            <person name="Suzuki M."/>
            <person name="Aoki J."/>
            <person name="Arakawa T."/>
            <person name="Iida J."/>
            <person name="Imamura K."/>
            <person name="Itoh M."/>
            <person name="Kato T."/>
            <person name="Kawaji H."/>
            <person name="Kawagashira N."/>
            <person name="Kawashima T."/>
            <person name="Kojima M."/>
            <person name="Kondo S."/>
            <person name="Konno H."/>
            <person name="Nakano K."/>
            <person name="Ninomiya N."/>
            <person name="Nishio T."/>
            <person name="Okada M."/>
            <person name="Plessy C."/>
            <person name="Shibata K."/>
            <person name="Shiraki T."/>
            <person name="Suzuki S."/>
            <person name="Tagami M."/>
            <person name="Waki K."/>
            <person name="Watahiki A."/>
            <person name="Okamura-Oho Y."/>
            <person name="Suzuki H."/>
            <person name="Kawai J."/>
            <person name="Hayashizaki Y."/>
        </authorList>
    </citation>
    <scope>NUCLEOTIDE SEQUENCE [LARGE SCALE MRNA] (ISOFORM 2)</scope>
    <source>
        <strain>C57BL/6J</strain>
        <tissue>Embryonic heart</tissue>
    </source>
</reference>
<reference key="3">
    <citation type="journal article" date="2004" name="Genome Res.">
        <title>The status, quality, and expansion of the NIH full-length cDNA project: the Mammalian Gene Collection (MGC).</title>
        <authorList>
            <consortium name="The MGC Project Team"/>
        </authorList>
    </citation>
    <scope>NUCLEOTIDE SEQUENCE [LARGE SCALE MRNA] (ISOFORM 3)</scope>
    <scope>NUCLEOTIDE SEQUENCE [LARGE SCALE MRNA] OF 223-1131 (ISOFORM 1)</scope>
    <source>
        <strain>C57BL/6J</strain>
        <strain>FVB/N</strain>
        <tissue>Colon</tissue>
        <tissue>Embryo</tissue>
        <tissue>Limb</tissue>
    </source>
</reference>
<reference key="4">
    <citation type="journal article" date="2007" name="Proc. Natl. Acad. Sci. U.S.A.">
        <title>Large-scale phosphorylation analysis of mouse liver.</title>
        <authorList>
            <person name="Villen J."/>
            <person name="Beausoleil S.A."/>
            <person name="Gerber S.A."/>
            <person name="Gygi S.P."/>
        </authorList>
    </citation>
    <scope>IDENTIFICATION BY MASS SPECTROMETRY [LARGE SCALE ANALYSIS]</scope>
    <source>
        <tissue>Liver</tissue>
    </source>
</reference>
<reference key="5">
    <citation type="journal article" date="2009" name="Mol. Cell. Proteomics">
        <title>Large scale localization of protein phosphorylation by use of electron capture dissociation mass spectrometry.</title>
        <authorList>
            <person name="Sweet S.M."/>
            <person name="Bailey C.M."/>
            <person name="Cunningham D.L."/>
            <person name="Heath J.K."/>
            <person name="Cooper H.J."/>
        </authorList>
    </citation>
    <scope>PHOSPHORYLATION [LARGE SCALE ANALYSIS] AT SER-789</scope>
    <scope>IDENTIFICATION BY MASS SPECTROMETRY [LARGE SCALE ANALYSIS]</scope>
    <source>
        <tissue>Embryonic fibroblast</tissue>
    </source>
</reference>
<reference key="6">
    <citation type="journal article" date="2010" name="Cell">
        <title>A tissue-specific atlas of mouse protein phosphorylation and expression.</title>
        <authorList>
            <person name="Huttlin E.L."/>
            <person name="Jedrychowski M.P."/>
            <person name="Elias J.E."/>
            <person name="Goswami T."/>
            <person name="Rad R."/>
            <person name="Beausoleil S.A."/>
            <person name="Villen J."/>
            <person name="Haas W."/>
            <person name="Sowa M.E."/>
            <person name="Gygi S.P."/>
        </authorList>
    </citation>
    <scope>PHOSPHORYLATION [LARGE SCALE ANALYSIS] AT SER-789; THR-984; THR-992 AND SER-1050</scope>
    <scope>IDENTIFICATION BY MASS SPECTROMETRY [LARGE SCALE ANALYSIS]</scope>
    <source>
        <tissue>Brown adipose tissue</tissue>
        <tissue>Heart</tissue>
        <tissue>Kidney</tissue>
        <tissue>Liver</tissue>
        <tissue>Lung</tissue>
        <tissue>Pancreas</tissue>
        <tissue>Spleen</tissue>
    </source>
</reference>
<name>FIL1L_MOUSE</name>
<comment type="function">
    <text evidence="1">Acts as a regulator of the antiangiogenic activity on endothelial cells. When overexpressed in endothelial cells, leads to inhibition of cell proliferation and migration and an increase in apoptosis. Inhibits melanoma growth When expressed in tumor-associated vasculature (By similarity).</text>
</comment>
<comment type="subcellular location">
    <subcellularLocation>
        <location evidence="1">Cytoplasm</location>
    </subcellularLocation>
    <subcellularLocation>
        <location evidence="1">Membrane</location>
    </subcellularLocation>
    <subcellularLocation>
        <location evidence="1">Nucleus</location>
    </subcellularLocation>
</comment>
<comment type="alternative products">
    <event type="alternative splicing"/>
    <isoform>
        <id>Q6P6L0-1</id>
        <name>1</name>
        <sequence type="displayed"/>
    </isoform>
    <isoform>
        <id>Q6P6L0-2</id>
        <name>2</name>
        <sequence type="described" ref="VSP_029208 VSP_029209"/>
    </isoform>
    <isoform>
        <id>Q6P6L0-3</id>
        <name>3</name>
        <sequence type="described" ref="VSP_029207"/>
    </isoform>
</comment>
<comment type="similarity">
    <text evidence="6">Belongs to the FILIP1 family.</text>
</comment>
<comment type="sequence caution" evidence="6">
    <conflict type="erroneous initiation">
        <sequence resource="EMBL-CDS" id="AAH24523"/>
    </conflict>
    <text>Extended N-terminus.</text>
</comment>
<comment type="sequence caution" evidence="6">
    <conflict type="miscellaneous discrepancy">
        <sequence resource="EMBL-CDS" id="AAH24523"/>
    </conflict>
    <text>Contaminating sequence. Potential poly-A sequence.</text>
</comment>
<comment type="sequence caution" evidence="6">
    <conflict type="erroneous initiation">
        <sequence resource="EMBL-CDS" id="AAH62166"/>
    </conflict>
</comment>
<comment type="sequence caution" evidence="6">
    <conflict type="erroneous initiation">
        <sequence resource="EMBL-CDS" id="ACC91883"/>
    </conflict>
</comment>
<feature type="chain" id="PRO_0000309471" description="Filamin A-interacting protein 1-like">
    <location>
        <begin position="1"/>
        <end position="1131"/>
    </location>
</feature>
<feature type="region of interest" description="Disordered" evidence="3">
    <location>
        <begin position="1"/>
        <end position="62"/>
    </location>
</feature>
<feature type="coiled-coil region" evidence="2">
    <location>
        <begin position="139"/>
        <end position="583"/>
    </location>
</feature>
<feature type="coiled-coil region" evidence="2">
    <location>
        <begin position="610"/>
        <end position="780"/>
    </location>
</feature>
<feature type="compositionally biased region" description="Basic and acidic residues" evidence="3">
    <location>
        <begin position="50"/>
        <end position="62"/>
    </location>
</feature>
<feature type="modified residue" description="Phosphoserine" evidence="7 8">
    <location>
        <position position="789"/>
    </location>
</feature>
<feature type="modified residue" description="Phosphothreonine" evidence="8">
    <location>
        <position position="984"/>
    </location>
</feature>
<feature type="modified residue" description="Phosphothreonine" evidence="8">
    <location>
        <position position="992"/>
    </location>
</feature>
<feature type="modified residue" description="Phosphoserine" evidence="8">
    <location>
        <position position="1050"/>
    </location>
</feature>
<feature type="splice variant" id="VSP_029207" description="In isoform 3." evidence="4">
    <location>
        <begin position="1"/>
        <end position="238"/>
    </location>
</feature>
<feature type="splice variant" id="VSP_029208" description="In isoform 2." evidence="5">
    <original>L</original>
    <variation>I</variation>
    <location>
        <position position="201"/>
    </location>
</feature>
<feature type="splice variant" id="VSP_029209" description="In isoform 2." evidence="5">
    <location>
        <begin position="202"/>
        <end position="1131"/>
    </location>
</feature>
<feature type="sequence conflict" description="In Ref. 1; ACD92726 and 2; ACC91883." evidence="6" ref="1 2">
    <original>N</original>
    <variation>K</variation>
    <location>
        <position position="632"/>
    </location>
</feature>
<feature type="sequence conflict" description="In Ref. 1; ACD92726 and 2; ACC91883." evidence="6" ref="1 2">
    <original>L</original>
    <variation>V</variation>
    <location>
        <position position="783"/>
    </location>
</feature>
<protein>
    <recommendedName>
        <fullName>Filamin A-interacting protein 1-like</fullName>
    </recommendedName>
    <alternativeName>
        <fullName>Protein down-regulated in ovarian cancer 1 homolog</fullName>
        <shortName>DOC-1</shortName>
    </alternativeName>
</protein>
<proteinExistence type="evidence at protein level"/>
<gene>
    <name type="primary">Filip1l</name>
    <name type="synonym">Doc1</name>
</gene>
<organism>
    <name type="scientific">Mus musculus</name>
    <name type="common">Mouse</name>
    <dbReference type="NCBI Taxonomy" id="10090"/>
    <lineage>
        <taxon>Eukaryota</taxon>
        <taxon>Metazoa</taxon>
        <taxon>Chordata</taxon>
        <taxon>Craniata</taxon>
        <taxon>Vertebrata</taxon>
        <taxon>Euteleostomi</taxon>
        <taxon>Mammalia</taxon>
        <taxon>Eutheria</taxon>
        <taxon>Euarchontoglires</taxon>
        <taxon>Glires</taxon>
        <taxon>Rodentia</taxon>
        <taxon>Myomorpha</taxon>
        <taxon>Muroidea</taxon>
        <taxon>Muridae</taxon>
        <taxon>Murinae</taxon>
        <taxon>Mus</taxon>
        <taxon>Mus</taxon>
    </lineage>
</organism>
<dbReference type="EMBL" id="EU623548">
    <property type="protein sequence ID" value="ACC91883.1"/>
    <property type="status" value="ALT_INIT"/>
    <property type="molecule type" value="mRNA"/>
</dbReference>
<dbReference type="EMBL" id="EU704258">
    <property type="protein sequence ID" value="ACD92726.1"/>
    <property type="molecule type" value="mRNA"/>
</dbReference>
<dbReference type="EMBL" id="AK146705">
    <property type="protein sequence ID" value="BAE27371.1"/>
    <property type="molecule type" value="mRNA"/>
</dbReference>
<dbReference type="EMBL" id="BC024523">
    <property type="protein sequence ID" value="AAH24523.1"/>
    <property type="status" value="ALT_SEQ"/>
    <property type="molecule type" value="mRNA"/>
</dbReference>
<dbReference type="EMBL" id="BC062166">
    <property type="protein sequence ID" value="AAH62166.1"/>
    <property type="status" value="ALT_INIT"/>
    <property type="molecule type" value="mRNA"/>
</dbReference>
<dbReference type="EMBL" id="BC098507">
    <property type="protein sequence ID" value="AAH98507.1"/>
    <property type="molecule type" value="mRNA"/>
</dbReference>
<dbReference type="CCDS" id="CCDS37366.2">
    <molecule id="Q6P6L0-1"/>
</dbReference>
<dbReference type="CCDS" id="CCDS49877.1">
    <molecule id="Q6P6L0-3"/>
</dbReference>
<dbReference type="SMR" id="Q6P6L0"/>
<dbReference type="FunCoup" id="Q6P6L0">
    <property type="interactions" value="148"/>
</dbReference>
<dbReference type="IntAct" id="Q6P6L0">
    <property type="interactions" value="1"/>
</dbReference>
<dbReference type="STRING" id="10090.ENSMUSP00000124179"/>
<dbReference type="GlyGen" id="Q6P6L0">
    <property type="glycosylation" value="3 sites, 1 O-linked glycan (2 sites)"/>
</dbReference>
<dbReference type="iPTMnet" id="Q6P6L0"/>
<dbReference type="PhosphoSitePlus" id="Q6P6L0"/>
<dbReference type="jPOST" id="Q6P6L0"/>
<dbReference type="PaxDb" id="10090-ENSMUSP00000124179"/>
<dbReference type="ProteomicsDB" id="266846">
    <molecule id="Q6P6L0-1"/>
</dbReference>
<dbReference type="ProteomicsDB" id="266848">
    <molecule id="Q6P6L0-3"/>
</dbReference>
<dbReference type="Pumba" id="Q6P6L0"/>
<dbReference type="Antibodypedia" id="46504">
    <property type="antibodies" value="104 antibodies from 21 providers"/>
</dbReference>
<dbReference type="Ensembl" id="ENSMUST00000099667.3">
    <molecule id="Q6P6L0-2"/>
    <property type="protein sequence ID" value="ENSMUSP00000133252.2"/>
    <property type="gene ID" value="ENSMUSG00000043336.15"/>
</dbReference>
<dbReference type="AGR" id="MGI:1925999"/>
<dbReference type="MGI" id="MGI:1925999">
    <property type="gene designation" value="Filip1l"/>
</dbReference>
<dbReference type="VEuPathDB" id="HostDB:ENSMUSG00000043336"/>
<dbReference type="eggNOG" id="KOG1103">
    <property type="taxonomic scope" value="Eukaryota"/>
</dbReference>
<dbReference type="GeneTree" id="ENSGT00950000182852"/>
<dbReference type="HOGENOM" id="CLU_104016_0_0_1"/>
<dbReference type="InParanoid" id="Q6P6L0"/>
<dbReference type="ChiTaRS" id="Filip1l">
    <property type="organism name" value="mouse"/>
</dbReference>
<dbReference type="PRO" id="PR:Q6P6L0"/>
<dbReference type="Proteomes" id="UP000000589">
    <property type="component" value="Chromosome 16"/>
</dbReference>
<dbReference type="RNAct" id="Q6P6L0">
    <property type="molecule type" value="protein"/>
</dbReference>
<dbReference type="Bgee" id="ENSMUSG00000043336">
    <property type="expression patterns" value="Expressed in ascending aorta and 176 other cell types or tissues"/>
</dbReference>
<dbReference type="ExpressionAtlas" id="Q6P6L0">
    <property type="expression patterns" value="baseline and differential"/>
</dbReference>
<dbReference type="GO" id="GO:0005813">
    <property type="term" value="C:centrosome"/>
    <property type="evidence" value="ECO:0000353"/>
    <property type="project" value="MGI"/>
</dbReference>
<dbReference type="GO" id="GO:0005737">
    <property type="term" value="C:cytoplasm"/>
    <property type="evidence" value="ECO:0007669"/>
    <property type="project" value="UniProtKB-SubCell"/>
</dbReference>
<dbReference type="GO" id="GO:0016020">
    <property type="term" value="C:membrane"/>
    <property type="evidence" value="ECO:0007669"/>
    <property type="project" value="UniProtKB-SubCell"/>
</dbReference>
<dbReference type="GO" id="GO:0005634">
    <property type="term" value="C:nucleus"/>
    <property type="evidence" value="ECO:0007669"/>
    <property type="project" value="UniProtKB-SubCell"/>
</dbReference>
<dbReference type="GO" id="GO:0010467">
    <property type="term" value="P:gene expression"/>
    <property type="evidence" value="ECO:0000315"/>
    <property type="project" value="MGI"/>
</dbReference>
<dbReference type="GO" id="GO:0061525">
    <property type="term" value="P:hindgut development"/>
    <property type="evidence" value="ECO:0000315"/>
    <property type="project" value="MGI"/>
</dbReference>
<dbReference type="GO" id="GO:0010498">
    <property type="term" value="P:proteasomal protein catabolic process"/>
    <property type="evidence" value="ECO:0000315"/>
    <property type="project" value="MGI"/>
</dbReference>
<dbReference type="GO" id="GO:0008104">
    <property type="term" value="P:protein localization"/>
    <property type="evidence" value="ECO:0000315"/>
    <property type="project" value="MGI"/>
</dbReference>
<dbReference type="GO" id="GO:0009306">
    <property type="term" value="P:protein secretion"/>
    <property type="evidence" value="ECO:0000315"/>
    <property type="project" value="MGI"/>
</dbReference>
<dbReference type="Gene3D" id="1.20.5.1700">
    <property type="match status" value="1"/>
</dbReference>
<dbReference type="InterPro" id="IPR050719">
    <property type="entry name" value="Cortactin-Actin_Reg"/>
</dbReference>
<dbReference type="InterPro" id="IPR019131">
    <property type="entry name" value="Cortactin-binding_p2_N"/>
</dbReference>
<dbReference type="PANTHER" id="PTHR23166:SF4">
    <property type="entry name" value="FILAMIN A-INTERACTING PROTEIN 1-LIKE"/>
    <property type="match status" value="1"/>
</dbReference>
<dbReference type="PANTHER" id="PTHR23166">
    <property type="entry name" value="FILAMIN/GPBP-INTERACTING PROTEIN"/>
    <property type="match status" value="1"/>
</dbReference>
<dbReference type="Pfam" id="PF09727">
    <property type="entry name" value="CortBP2"/>
    <property type="match status" value="1"/>
</dbReference>
<evidence type="ECO:0000250" key="1"/>
<evidence type="ECO:0000255" key="2"/>
<evidence type="ECO:0000256" key="3">
    <source>
        <dbReference type="SAM" id="MobiDB-lite"/>
    </source>
</evidence>
<evidence type="ECO:0000303" key="4">
    <source>
    </source>
</evidence>
<evidence type="ECO:0000303" key="5">
    <source>
    </source>
</evidence>
<evidence type="ECO:0000305" key="6"/>
<evidence type="ECO:0007744" key="7">
    <source>
    </source>
</evidence>
<evidence type="ECO:0007744" key="8">
    <source>
    </source>
</evidence>
<accession>Q6P6L0</accession>
<accession>B2ZAA3</accession>
<accession>B3GM33</accession>
<accession>Q05CK4</accession>
<accession>Q3UIY5</accession>
<accession>Q4G0B9</accession>
<keyword id="KW-0025">Alternative splicing</keyword>
<keyword id="KW-0175">Coiled coil</keyword>
<keyword id="KW-0963">Cytoplasm</keyword>
<keyword id="KW-0472">Membrane</keyword>
<keyword id="KW-0539">Nucleus</keyword>
<keyword id="KW-0597">Phosphoprotein</keyword>
<keyword id="KW-1185">Reference proteome</keyword>